<feature type="chain" id="PRO_0000215438" description="Large ribosomal subunit protein eL38">
    <location>
        <begin position="1"/>
        <end position="70"/>
    </location>
</feature>
<dbReference type="EMBL" id="Z81463">
    <property type="protein sequence ID" value="CAB03853.1"/>
    <property type="molecule type" value="Genomic_DNA"/>
</dbReference>
<dbReference type="PIR" id="T18996">
    <property type="entry name" value="T18996"/>
</dbReference>
<dbReference type="RefSeq" id="NP_506860.1">
    <property type="nucleotide sequence ID" value="NM_074459.8"/>
</dbReference>
<dbReference type="PDB" id="9BH5">
    <property type="method" value="EM"/>
    <property type="resolution" value="2.63 A"/>
    <property type="chains" value="Ck=1-70"/>
</dbReference>
<dbReference type="PDB" id="9CAI">
    <property type="method" value="EM"/>
    <property type="resolution" value="2.59 A"/>
    <property type="chains" value="Ck=1-70"/>
</dbReference>
<dbReference type="PDBsum" id="9BH5"/>
<dbReference type="PDBsum" id="9CAI"/>
<dbReference type="EMDB" id="EMD-44533"/>
<dbReference type="EMDB" id="EMD-45392"/>
<dbReference type="SMR" id="O17570"/>
<dbReference type="BioGRID" id="45039">
    <property type="interactions" value="91"/>
</dbReference>
<dbReference type="FunCoup" id="O17570">
    <property type="interactions" value="1596"/>
</dbReference>
<dbReference type="IntAct" id="O17570">
    <property type="interactions" value="1"/>
</dbReference>
<dbReference type="STRING" id="6239.C06B8.8.6"/>
<dbReference type="PaxDb" id="6239-C06B8.8.6"/>
<dbReference type="PeptideAtlas" id="O17570"/>
<dbReference type="EnsemblMetazoa" id="C06B8.8.1">
    <property type="protein sequence ID" value="C06B8.8.1"/>
    <property type="gene ID" value="WBGene00004452"/>
</dbReference>
<dbReference type="EnsemblMetazoa" id="C06B8.8.2">
    <property type="protein sequence ID" value="C06B8.8.2"/>
    <property type="gene ID" value="WBGene00004452"/>
</dbReference>
<dbReference type="EnsemblMetazoa" id="C06B8.8.3">
    <property type="protein sequence ID" value="C06B8.8.3"/>
    <property type="gene ID" value="WBGene00004452"/>
</dbReference>
<dbReference type="EnsemblMetazoa" id="C06B8.8.4">
    <property type="protein sequence ID" value="C06B8.8.4"/>
    <property type="gene ID" value="WBGene00004452"/>
</dbReference>
<dbReference type="GeneID" id="180044"/>
<dbReference type="KEGG" id="cel:CELE_C06B8.8"/>
<dbReference type="UCSC" id="C06B8.8.1">
    <property type="organism name" value="c. elegans"/>
</dbReference>
<dbReference type="AGR" id="WB:WBGene00004452"/>
<dbReference type="CTD" id="180044"/>
<dbReference type="WormBase" id="C06B8.8">
    <property type="protein sequence ID" value="CE20485"/>
    <property type="gene ID" value="WBGene00004452"/>
    <property type="gene designation" value="rpl-38"/>
</dbReference>
<dbReference type="eggNOG" id="KOG3499">
    <property type="taxonomic scope" value="Eukaryota"/>
</dbReference>
<dbReference type="GeneTree" id="ENSGT00390000003718"/>
<dbReference type="HOGENOM" id="CLU_152057_2_0_1"/>
<dbReference type="InParanoid" id="O17570"/>
<dbReference type="OMA" id="RCHRFIY"/>
<dbReference type="OrthoDB" id="10250488at2759"/>
<dbReference type="PhylomeDB" id="O17570"/>
<dbReference type="Reactome" id="R-CEL-156827">
    <property type="pathway name" value="L13a-mediated translational silencing of Ceruloplasmin expression"/>
</dbReference>
<dbReference type="Reactome" id="R-CEL-1799339">
    <property type="pathway name" value="SRP-dependent cotranslational protein targeting to membrane"/>
</dbReference>
<dbReference type="Reactome" id="R-CEL-72689">
    <property type="pathway name" value="Formation of a pool of free 40S subunits"/>
</dbReference>
<dbReference type="Reactome" id="R-CEL-72706">
    <property type="pathway name" value="GTP hydrolysis and joining of the 60S ribosomal subunit"/>
</dbReference>
<dbReference type="Reactome" id="R-CEL-975956">
    <property type="pathway name" value="Nonsense Mediated Decay (NMD) independent of the Exon Junction Complex (EJC)"/>
</dbReference>
<dbReference type="Reactome" id="R-CEL-975957">
    <property type="pathway name" value="Nonsense Mediated Decay (NMD) enhanced by the Exon Junction Complex (EJC)"/>
</dbReference>
<dbReference type="PRO" id="PR:O17570"/>
<dbReference type="Proteomes" id="UP000001940">
    <property type="component" value="Chromosome V"/>
</dbReference>
<dbReference type="Bgee" id="WBGene00004452">
    <property type="expression patterns" value="Expressed in germ line (C elegans) and 4 other cell types or tissues"/>
</dbReference>
<dbReference type="GO" id="GO:0022625">
    <property type="term" value="C:cytosolic large ribosomal subunit"/>
    <property type="evidence" value="ECO:0000318"/>
    <property type="project" value="GO_Central"/>
</dbReference>
<dbReference type="GO" id="GO:0003735">
    <property type="term" value="F:structural constituent of ribosome"/>
    <property type="evidence" value="ECO:0000318"/>
    <property type="project" value="GO_Central"/>
</dbReference>
<dbReference type="GO" id="GO:0022618">
    <property type="term" value="P:protein-RNA complex assembly"/>
    <property type="evidence" value="ECO:0000318"/>
    <property type="project" value="GO_Central"/>
</dbReference>
<dbReference type="GO" id="GO:0006412">
    <property type="term" value="P:translation"/>
    <property type="evidence" value="ECO:0007669"/>
    <property type="project" value="InterPro"/>
</dbReference>
<dbReference type="FunFam" id="3.30.720.90:FF:000001">
    <property type="entry name" value="60S ribosomal protein L38"/>
    <property type="match status" value="1"/>
</dbReference>
<dbReference type="Gene3D" id="3.30.720.90">
    <property type="match status" value="1"/>
</dbReference>
<dbReference type="InterPro" id="IPR002675">
    <property type="entry name" value="Ribosomal_eL38"/>
</dbReference>
<dbReference type="InterPro" id="IPR038464">
    <property type="entry name" value="Ribosomal_eL38_sf"/>
</dbReference>
<dbReference type="PANTHER" id="PTHR10965">
    <property type="entry name" value="60S RIBOSOMAL PROTEIN L38"/>
    <property type="match status" value="1"/>
</dbReference>
<dbReference type="PANTHER" id="PTHR10965:SF0">
    <property type="entry name" value="LARGE RIBOSOMAL SUBUNIT PROTEIN EL38"/>
    <property type="match status" value="1"/>
</dbReference>
<dbReference type="Pfam" id="PF01781">
    <property type="entry name" value="Ribosomal_L38e"/>
    <property type="match status" value="1"/>
</dbReference>
<reference key="1">
    <citation type="journal article" date="1998" name="Science">
        <title>Genome sequence of the nematode C. elegans: a platform for investigating biology.</title>
        <authorList>
            <consortium name="The C. elegans sequencing consortium"/>
        </authorList>
    </citation>
    <scope>NUCLEOTIDE SEQUENCE [LARGE SCALE GENOMIC DNA]</scope>
    <source>
        <strain>Bristol N2</strain>
    </source>
</reference>
<protein>
    <recommendedName>
        <fullName evidence="1">Large ribosomal subunit protein eL38</fullName>
    </recommendedName>
    <alternativeName>
        <fullName>60S ribosomal protein L38</fullName>
    </alternativeName>
</protein>
<name>RL38_CAEEL</name>
<gene>
    <name type="primary">rpl-38</name>
    <name type="ORF">C06B8.8</name>
</gene>
<comment type="similarity">
    <text evidence="1">Belongs to the eukaryotic ribosomal protein eL38 family.</text>
</comment>
<proteinExistence type="evidence at protein level"/>
<evidence type="ECO:0000305" key="1"/>
<accession>O17570</accession>
<keyword id="KW-0002">3D-structure</keyword>
<keyword id="KW-1185">Reference proteome</keyword>
<keyword id="KW-0687">Ribonucleoprotein</keyword>
<keyword id="KW-0689">Ribosomal protein</keyword>
<organism>
    <name type="scientific">Caenorhabditis elegans</name>
    <dbReference type="NCBI Taxonomy" id="6239"/>
    <lineage>
        <taxon>Eukaryota</taxon>
        <taxon>Metazoa</taxon>
        <taxon>Ecdysozoa</taxon>
        <taxon>Nematoda</taxon>
        <taxon>Chromadorea</taxon>
        <taxon>Rhabditida</taxon>
        <taxon>Rhabditina</taxon>
        <taxon>Rhabditomorpha</taxon>
        <taxon>Rhabditoidea</taxon>
        <taxon>Rhabditidae</taxon>
        <taxon>Peloderinae</taxon>
        <taxon>Caenorhabditis</taxon>
    </lineage>
</organism>
<sequence>MPKEIKEIKDFLVKARRKDAKSVKIKKNSNNTKFKVRCASYLYTLVVADKDKAEKLKQSLPPGIQVKELK</sequence>